<organism>
    <name type="scientific">Caenorhabditis elegans</name>
    <dbReference type="NCBI Taxonomy" id="6239"/>
    <lineage>
        <taxon>Eukaryota</taxon>
        <taxon>Metazoa</taxon>
        <taxon>Ecdysozoa</taxon>
        <taxon>Nematoda</taxon>
        <taxon>Chromadorea</taxon>
        <taxon>Rhabditida</taxon>
        <taxon>Rhabditina</taxon>
        <taxon>Rhabditomorpha</taxon>
        <taxon>Rhabditoidea</taxon>
        <taxon>Rhabditidae</taxon>
        <taxon>Peloderinae</taxon>
        <taxon>Caenorhabditis</taxon>
    </lineage>
</organism>
<evidence type="ECO:0000255" key="1"/>
<evidence type="ECO:0000256" key="2">
    <source>
        <dbReference type="SAM" id="MobiDB-lite"/>
    </source>
</evidence>
<evidence type="ECO:0000269" key="3">
    <source>
    </source>
</evidence>
<evidence type="ECO:0000305" key="4"/>
<sequence>MAQIVRQSKFRHVFCKPVKHESCMSDIRVTEITWDSLFCDVNPKFIAFINRGAGGPFMVIPVNKIGRVDKDYPFVDAHKAPCLEVAWSPFNDNVIASCSEDTTCKVWVIPDRGLNRNLSEPAVELTGHQKRVNTIAWHPVANNVLLTAGGENVMFMWNVGTGEALLEISGHPDQIWSINFNFDGSQFVTTCKDKKIRILDSHTGEVVHEGMGHEGVKPQRAIFVKDGLILSTGFTKRSERLYALRAPEDLSTPIVEEELDTSNGVVFPFYDEDSGLVYLVGKGDCAIRYYEVNNDAPYVHYINTYTTNEPQRAVGFQSKRGMSSEENEINRIYKLTTKGVVDILQFFVPRKSDLFQHDLYPDTRSTIPALTAEEFMEGKNAAPNRQPVNAAAAAAAAKPKVQVAKKANILSTLAPTAAESVPTQSYSERPPSSQQPSPRPSASPRPRPVVDDDMGIVTMREAPPSRPASSRASRTEIPPKEESKVDPMKPKQAVQLKSRAARDEPGGGAQTAGQRRAAAELERIKRDQSRTADEDNTLAPPPSSSRASASPRGSVSAASDVGHVPQNMDELLEDLMKMKAVLRQHERRIRMLEEEIADRNMSNAYSF</sequence>
<accession>Q21624</accession>
<accession>Q8T3D5</accession>
<accession>Q8T3D6</accession>
<accession>Q8T3D7</accession>
<proteinExistence type="evidence at transcript level"/>
<feature type="chain" id="PRO_0000050937" description="Coronin-like protein cor-1">
    <location>
        <begin position="1"/>
        <end position="607"/>
    </location>
</feature>
<feature type="repeat" description="WD 1">
    <location>
        <begin position="77"/>
        <end position="117"/>
    </location>
</feature>
<feature type="repeat" description="WD 2">
    <location>
        <begin position="127"/>
        <end position="167"/>
    </location>
</feature>
<feature type="repeat" description="WD 3">
    <location>
        <begin position="170"/>
        <end position="209"/>
    </location>
</feature>
<feature type="region of interest" description="Disordered" evidence="2">
    <location>
        <begin position="415"/>
        <end position="564"/>
    </location>
</feature>
<feature type="coiled-coil region" evidence="1">
    <location>
        <begin position="563"/>
        <end position="602"/>
    </location>
</feature>
<feature type="compositionally biased region" description="Low complexity" evidence="2">
    <location>
        <begin position="424"/>
        <end position="436"/>
    </location>
</feature>
<feature type="compositionally biased region" description="Pro residues" evidence="2">
    <location>
        <begin position="437"/>
        <end position="447"/>
    </location>
</feature>
<feature type="compositionally biased region" description="Basic and acidic residues" evidence="2">
    <location>
        <begin position="473"/>
        <end position="489"/>
    </location>
</feature>
<feature type="compositionally biased region" description="Basic and acidic residues" evidence="2">
    <location>
        <begin position="517"/>
        <end position="533"/>
    </location>
</feature>
<feature type="compositionally biased region" description="Low complexity" evidence="2">
    <location>
        <begin position="544"/>
        <end position="559"/>
    </location>
</feature>
<feature type="splice variant" id="VSP_020790" description="In isoform b." evidence="4">
    <location>
        <begin position="494"/>
        <end position="562"/>
    </location>
</feature>
<feature type="splice variant" id="VSP_020792" description="In isoform a." evidence="4">
    <location>
        <begin position="561"/>
        <end position="562"/>
    </location>
</feature>
<name>CORO_CAEEL</name>
<dbReference type="EMBL" id="Z31590">
    <property type="protein sequence ID" value="CAA83461.1"/>
    <property type="molecule type" value="Genomic_DNA"/>
</dbReference>
<dbReference type="EMBL" id="Z31590">
    <property type="protein sequence ID" value="CAD27604.1"/>
    <property type="molecule type" value="Genomic_DNA"/>
</dbReference>
<dbReference type="EMBL" id="Z31590">
    <property type="protein sequence ID" value="CAD27605.1"/>
    <property type="molecule type" value="Genomic_DNA"/>
</dbReference>
<dbReference type="EMBL" id="Z31590">
    <property type="protein sequence ID" value="CAD27606.1"/>
    <property type="molecule type" value="Genomic_DNA"/>
</dbReference>
<dbReference type="PIR" id="S43568">
    <property type="entry name" value="S43568"/>
</dbReference>
<dbReference type="RefSeq" id="NP_741268.1">
    <molecule id="Q21624-1"/>
    <property type="nucleotide sequence ID" value="NM_171226.5"/>
</dbReference>
<dbReference type="RefSeq" id="NP_741269.1">
    <molecule id="Q21624-2"/>
    <property type="nucleotide sequence ID" value="NM_171892.8"/>
</dbReference>
<dbReference type="RefSeq" id="NP_741270.1">
    <molecule id="Q21624-3"/>
    <property type="nucleotide sequence ID" value="NM_171893.6"/>
</dbReference>
<dbReference type="RefSeq" id="NP_741271.1">
    <property type="nucleotide sequence ID" value="NM_171227.3"/>
</dbReference>
<dbReference type="SMR" id="Q21624"/>
<dbReference type="BioGRID" id="41634">
    <property type="interactions" value="6"/>
</dbReference>
<dbReference type="FunCoup" id="Q21624">
    <property type="interactions" value="1886"/>
</dbReference>
<dbReference type="IntAct" id="Q21624">
    <property type="interactions" value="1"/>
</dbReference>
<dbReference type="STRING" id="6239.R01H10.3c.2"/>
<dbReference type="PaxDb" id="6239-R01H10.3c"/>
<dbReference type="PeptideAtlas" id="Q21624"/>
<dbReference type="EnsemblMetazoa" id="R01H10.3a.1">
    <molecule id="Q21624-2"/>
    <property type="protein sequence ID" value="R01H10.3a.1"/>
    <property type="gene ID" value="WBGene00000768"/>
</dbReference>
<dbReference type="EnsemblMetazoa" id="R01H10.3b.1">
    <molecule id="Q21624-3"/>
    <property type="protein sequence ID" value="R01H10.3b.1"/>
    <property type="gene ID" value="WBGene00000768"/>
</dbReference>
<dbReference type="EnsemblMetazoa" id="R01H10.3c.1">
    <molecule id="Q21624-1"/>
    <property type="protein sequence ID" value="R01H10.3c.1"/>
    <property type="gene ID" value="WBGene00000768"/>
</dbReference>
<dbReference type="GeneID" id="176440"/>
<dbReference type="KEGG" id="cel:CELE_R01H10.3"/>
<dbReference type="UCSC" id="R01H10.3d">
    <molecule id="Q21624-1"/>
    <property type="organism name" value="c. elegans"/>
</dbReference>
<dbReference type="AGR" id="WB:WBGene00000768"/>
<dbReference type="CTD" id="176440"/>
<dbReference type="WormBase" id="R01H10.3a">
    <molecule id="Q21624-2"/>
    <property type="protein sequence ID" value="CE00590"/>
    <property type="gene ID" value="WBGene00000768"/>
    <property type="gene designation" value="cor-1"/>
</dbReference>
<dbReference type="WormBase" id="R01H10.3b">
    <molecule id="Q21624-3"/>
    <property type="protein sequence ID" value="CE30350"/>
    <property type="gene ID" value="WBGene00000768"/>
    <property type="gene designation" value="cor-1"/>
</dbReference>
<dbReference type="WormBase" id="R01H10.3c">
    <molecule id="Q21624-1"/>
    <property type="protein sequence ID" value="CE30351"/>
    <property type="gene ID" value="WBGene00000768"/>
    <property type="gene designation" value="cor-1"/>
</dbReference>
<dbReference type="eggNOG" id="KOG0303">
    <property type="taxonomic scope" value="Eukaryota"/>
</dbReference>
<dbReference type="GeneTree" id="ENSGT00940000168719"/>
<dbReference type="InParanoid" id="Q21624"/>
<dbReference type="OMA" id="IWSINFN"/>
<dbReference type="OrthoDB" id="1850764at2759"/>
<dbReference type="PhylomeDB" id="Q21624"/>
<dbReference type="PRO" id="PR:Q21624"/>
<dbReference type="Proteomes" id="UP000001940">
    <property type="component" value="Chromosome III"/>
</dbReference>
<dbReference type="Bgee" id="WBGene00000768">
    <property type="expression patterns" value="Expressed in pharyngeal muscle cell (C elegans) and 3 other cell types or tissues"/>
</dbReference>
<dbReference type="GO" id="GO:0005737">
    <property type="term" value="C:cytoplasm"/>
    <property type="evidence" value="ECO:0007669"/>
    <property type="project" value="UniProtKB-KW"/>
</dbReference>
<dbReference type="GO" id="GO:0005856">
    <property type="term" value="C:cytoskeleton"/>
    <property type="evidence" value="ECO:0007669"/>
    <property type="project" value="UniProtKB-SubCell"/>
</dbReference>
<dbReference type="GO" id="GO:0051015">
    <property type="term" value="F:actin filament binding"/>
    <property type="evidence" value="ECO:0000318"/>
    <property type="project" value="GO_Central"/>
</dbReference>
<dbReference type="GO" id="GO:0007015">
    <property type="term" value="P:actin filament organization"/>
    <property type="evidence" value="ECO:0000318"/>
    <property type="project" value="GO_Central"/>
</dbReference>
<dbReference type="FunFam" id="2.130.10.10:FF:000502">
    <property type="entry name" value="Coronin"/>
    <property type="match status" value="1"/>
</dbReference>
<dbReference type="Gene3D" id="2.130.10.10">
    <property type="entry name" value="YVTN repeat-like/Quinoprotein amine dehydrogenase"/>
    <property type="match status" value="1"/>
</dbReference>
<dbReference type="InterPro" id="IPR015505">
    <property type="entry name" value="Coronin"/>
</dbReference>
<dbReference type="InterPro" id="IPR015048">
    <property type="entry name" value="DUF1899"/>
</dbReference>
<dbReference type="InterPro" id="IPR015943">
    <property type="entry name" value="WD40/YVTN_repeat-like_dom_sf"/>
</dbReference>
<dbReference type="InterPro" id="IPR036322">
    <property type="entry name" value="WD40_repeat_dom_sf"/>
</dbReference>
<dbReference type="InterPro" id="IPR001680">
    <property type="entry name" value="WD40_rpt"/>
</dbReference>
<dbReference type="PANTHER" id="PTHR10856">
    <property type="entry name" value="CORONIN"/>
    <property type="match status" value="1"/>
</dbReference>
<dbReference type="PANTHER" id="PTHR10856:SF0">
    <property type="entry name" value="CORONIN"/>
    <property type="match status" value="1"/>
</dbReference>
<dbReference type="Pfam" id="PF08953">
    <property type="entry name" value="DUF1899"/>
    <property type="match status" value="1"/>
</dbReference>
<dbReference type="Pfam" id="PF00400">
    <property type="entry name" value="WD40"/>
    <property type="match status" value="3"/>
</dbReference>
<dbReference type="Pfam" id="PF16300">
    <property type="entry name" value="WD40_4"/>
    <property type="match status" value="1"/>
</dbReference>
<dbReference type="SMART" id="SM01166">
    <property type="entry name" value="DUF1899"/>
    <property type="match status" value="1"/>
</dbReference>
<dbReference type="SMART" id="SM01167">
    <property type="entry name" value="DUF1900"/>
    <property type="match status" value="1"/>
</dbReference>
<dbReference type="SMART" id="SM00320">
    <property type="entry name" value="WD40"/>
    <property type="match status" value="3"/>
</dbReference>
<dbReference type="SUPFAM" id="SSF50978">
    <property type="entry name" value="WD40 repeat-like"/>
    <property type="match status" value="1"/>
</dbReference>
<dbReference type="PROSITE" id="PS50082">
    <property type="entry name" value="WD_REPEATS_2"/>
    <property type="match status" value="3"/>
</dbReference>
<dbReference type="PROSITE" id="PS50294">
    <property type="entry name" value="WD_REPEATS_REGION"/>
    <property type="match status" value="1"/>
</dbReference>
<reference key="1">
    <citation type="journal article" date="1998" name="Science">
        <title>Genome sequence of the nematode C. elegans: a platform for investigating biology.</title>
        <authorList>
            <consortium name="The C. elegans sequencing consortium"/>
        </authorList>
    </citation>
    <scope>NUCLEOTIDE SEQUENCE [LARGE SCALE GENOMIC DNA]</scope>
    <scope>ALTERNATIVE SPLICING</scope>
    <source>
        <strain>Bristol N2</strain>
    </source>
</reference>
<reference key="2">
    <citation type="journal article" date="2013" name="Proc. Natl. Acad. Sci. U.S.A.">
        <title>Transmembrane protein MIG-13 links the Wnt signaling and Hox genes to the cell polarity in neuronal migration.</title>
        <authorList>
            <person name="Wang X."/>
            <person name="Zhou F."/>
            <person name="Lv S."/>
            <person name="Yi P."/>
            <person name="Zhu Z."/>
            <person name="Yang Y."/>
            <person name="Feng G."/>
            <person name="Li W."/>
            <person name="Ou G."/>
        </authorList>
    </citation>
    <scope>FUNCTION</scope>
    <scope>SUBCELLULAR LOCATION</scope>
    <scope>DEVELOPMENTAL STAGE</scope>
</reference>
<keyword id="KW-0009">Actin-binding</keyword>
<keyword id="KW-0025">Alternative splicing</keyword>
<keyword id="KW-0175">Coiled coil</keyword>
<keyword id="KW-0963">Cytoplasm</keyword>
<keyword id="KW-0206">Cytoskeleton</keyword>
<keyword id="KW-1185">Reference proteome</keyword>
<keyword id="KW-0677">Repeat</keyword>
<keyword id="KW-0853">WD repeat</keyword>
<comment type="function">
    <text evidence="3">Required to direct the migration of Q neuroblasts along the anterior axis of the body during larval development. This is dependent on its asymmetric expression in Q neuroblasts.</text>
</comment>
<comment type="subcellular location">
    <subcellularLocation>
        <location evidence="3">Cytoplasm</location>
        <location evidence="3">Cytoskeleton</location>
    </subcellularLocation>
</comment>
<comment type="alternative products">
    <event type="alternative splicing"/>
    <isoform>
        <id>Q21624-1</id>
        <name>c</name>
        <sequence type="displayed"/>
    </isoform>
    <isoform>
        <id>Q21624-2</id>
        <name>a</name>
        <sequence type="described" ref="VSP_020792"/>
    </isoform>
    <isoform>
        <id>Q21624-3</id>
        <name>b</name>
        <sequence type="described" ref="VSP_020790"/>
    </isoform>
</comment>
<comment type="developmental stage">
    <text evidence="3">Asymmetrically expressed in Q neuroblasts during larval development. Highly expressed at the leading edge of migrating Q neuroblasts.</text>
</comment>
<comment type="similarity">
    <text evidence="4">Belongs to the WD repeat coronin family.</text>
</comment>
<protein>
    <recommendedName>
        <fullName>Coronin-like protein cor-1</fullName>
    </recommendedName>
</protein>
<gene>
    <name type="primary">cor-1</name>
    <name type="ORF">R01H10.3</name>
</gene>